<gene>
    <name evidence="1" type="primary">rpsI</name>
    <name type="ordered locus">Bcenmc03_0647</name>
</gene>
<reference key="1">
    <citation type="submission" date="2008-02" db="EMBL/GenBank/DDBJ databases">
        <title>Complete sequence of chromosome 1 of Burkholderia cenocepacia MC0-3.</title>
        <authorList>
            <person name="Copeland A."/>
            <person name="Lucas S."/>
            <person name="Lapidus A."/>
            <person name="Barry K."/>
            <person name="Bruce D."/>
            <person name="Goodwin L."/>
            <person name="Glavina del Rio T."/>
            <person name="Dalin E."/>
            <person name="Tice H."/>
            <person name="Pitluck S."/>
            <person name="Chain P."/>
            <person name="Malfatti S."/>
            <person name="Shin M."/>
            <person name="Vergez L."/>
            <person name="Schmutz J."/>
            <person name="Larimer F."/>
            <person name="Land M."/>
            <person name="Hauser L."/>
            <person name="Kyrpides N."/>
            <person name="Mikhailova N."/>
            <person name="Tiedje J."/>
            <person name="Richardson P."/>
        </authorList>
    </citation>
    <scope>NUCLEOTIDE SEQUENCE [LARGE SCALE GENOMIC DNA]</scope>
    <source>
        <strain>MC0-3</strain>
    </source>
</reference>
<organism>
    <name type="scientific">Burkholderia orbicola (strain MC0-3)</name>
    <dbReference type="NCBI Taxonomy" id="406425"/>
    <lineage>
        <taxon>Bacteria</taxon>
        <taxon>Pseudomonadati</taxon>
        <taxon>Pseudomonadota</taxon>
        <taxon>Betaproteobacteria</taxon>
        <taxon>Burkholderiales</taxon>
        <taxon>Burkholderiaceae</taxon>
        <taxon>Burkholderia</taxon>
        <taxon>Burkholderia cepacia complex</taxon>
        <taxon>Burkholderia orbicola</taxon>
    </lineage>
</organism>
<evidence type="ECO:0000255" key="1">
    <source>
        <dbReference type="HAMAP-Rule" id="MF_00532"/>
    </source>
</evidence>
<evidence type="ECO:0000305" key="2"/>
<comment type="similarity">
    <text evidence="1">Belongs to the universal ribosomal protein uS9 family.</text>
</comment>
<proteinExistence type="inferred from homology"/>
<name>RS9_BURO0</name>
<protein>
    <recommendedName>
        <fullName evidence="1">Small ribosomal subunit protein uS9</fullName>
    </recommendedName>
    <alternativeName>
        <fullName evidence="2">30S ribosomal protein S9</fullName>
    </alternativeName>
</protein>
<feature type="chain" id="PRO_1000128092" description="Small ribosomal subunit protein uS9">
    <location>
        <begin position="1"/>
        <end position="130"/>
    </location>
</feature>
<keyword id="KW-0687">Ribonucleoprotein</keyword>
<keyword id="KW-0689">Ribosomal protein</keyword>
<accession>B1JVU5</accession>
<sequence>MIGNWNYGTGRRKSAVARVFIKAGKGDIIVNGKPIADYFSRETSLMIVRQPLELTNHGQTFDIKVNVNGGGETGQAGAVRHGITRALIDYDATLKPSLSSAGFVTRDAREVERKKVGLRKARRAKQFSKR</sequence>
<dbReference type="EMBL" id="CP000958">
    <property type="protein sequence ID" value="ACA89825.1"/>
    <property type="molecule type" value="Genomic_DNA"/>
</dbReference>
<dbReference type="RefSeq" id="WP_006476904.1">
    <property type="nucleotide sequence ID" value="NC_010508.1"/>
</dbReference>
<dbReference type="SMR" id="B1JVU5"/>
<dbReference type="GeneID" id="93139380"/>
<dbReference type="KEGG" id="bcm:Bcenmc03_0647"/>
<dbReference type="HOGENOM" id="CLU_046483_2_1_4"/>
<dbReference type="Proteomes" id="UP000002169">
    <property type="component" value="Chromosome 1"/>
</dbReference>
<dbReference type="GO" id="GO:0022627">
    <property type="term" value="C:cytosolic small ribosomal subunit"/>
    <property type="evidence" value="ECO:0007669"/>
    <property type="project" value="TreeGrafter"/>
</dbReference>
<dbReference type="GO" id="GO:0003723">
    <property type="term" value="F:RNA binding"/>
    <property type="evidence" value="ECO:0007669"/>
    <property type="project" value="TreeGrafter"/>
</dbReference>
<dbReference type="GO" id="GO:0003735">
    <property type="term" value="F:structural constituent of ribosome"/>
    <property type="evidence" value="ECO:0007669"/>
    <property type="project" value="InterPro"/>
</dbReference>
<dbReference type="GO" id="GO:0006412">
    <property type="term" value="P:translation"/>
    <property type="evidence" value="ECO:0007669"/>
    <property type="project" value="UniProtKB-UniRule"/>
</dbReference>
<dbReference type="FunFam" id="3.30.230.10:FF:000001">
    <property type="entry name" value="30S ribosomal protein S9"/>
    <property type="match status" value="1"/>
</dbReference>
<dbReference type="Gene3D" id="3.30.230.10">
    <property type="match status" value="1"/>
</dbReference>
<dbReference type="HAMAP" id="MF_00532_B">
    <property type="entry name" value="Ribosomal_uS9_B"/>
    <property type="match status" value="1"/>
</dbReference>
<dbReference type="InterPro" id="IPR020568">
    <property type="entry name" value="Ribosomal_Su5_D2-typ_SF"/>
</dbReference>
<dbReference type="InterPro" id="IPR000754">
    <property type="entry name" value="Ribosomal_uS9"/>
</dbReference>
<dbReference type="InterPro" id="IPR023035">
    <property type="entry name" value="Ribosomal_uS9_bac/plastid"/>
</dbReference>
<dbReference type="InterPro" id="IPR020574">
    <property type="entry name" value="Ribosomal_uS9_CS"/>
</dbReference>
<dbReference type="InterPro" id="IPR014721">
    <property type="entry name" value="Ribsml_uS5_D2-typ_fold_subgr"/>
</dbReference>
<dbReference type="NCBIfam" id="NF001099">
    <property type="entry name" value="PRK00132.1"/>
    <property type="match status" value="1"/>
</dbReference>
<dbReference type="PANTHER" id="PTHR21569">
    <property type="entry name" value="RIBOSOMAL PROTEIN S9"/>
    <property type="match status" value="1"/>
</dbReference>
<dbReference type="PANTHER" id="PTHR21569:SF1">
    <property type="entry name" value="SMALL RIBOSOMAL SUBUNIT PROTEIN US9M"/>
    <property type="match status" value="1"/>
</dbReference>
<dbReference type="Pfam" id="PF00380">
    <property type="entry name" value="Ribosomal_S9"/>
    <property type="match status" value="1"/>
</dbReference>
<dbReference type="SUPFAM" id="SSF54211">
    <property type="entry name" value="Ribosomal protein S5 domain 2-like"/>
    <property type="match status" value="1"/>
</dbReference>
<dbReference type="PROSITE" id="PS00360">
    <property type="entry name" value="RIBOSOMAL_S9"/>
    <property type="match status" value="1"/>
</dbReference>